<comment type="subcellular location">
    <subcellularLocation>
        <location evidence="3">Membrane</location>
        <topology evidence="3">Single-pass type II membrane protein</topology>
    </subcellularLocation>
</comment>
<comment type="alternative products">
    <event type="alternative splicing"/>
    <isoform>
        <id>Q6NSU3-1</id>
        <name>1</name>
        <sequence type="displayed"/>
    </isoform>
    <isoform>
        <id>Q6NSU3-2</id>
        <name>2</name>
        <sequence type="described" ref="VSP_025707 VSP_025708"/>
    </isoform>
</comment>
<comment type="similarity">
    <text evidence="3">Belongs to the glycosyltransferase 8 family.</text>
</comment>
<keyword id="KW-0025">Alternative splicing</keyword>
<keyword id="KW-0325">Glycoprotein</keyword>
<keyword id="KW-0328">Glycosyltransferase</keyword>
<keyword id="KW-0472">Membrane</keyword>
<keyword id="KW-1185">Reference proteome</keyword>
<keyword id="KW-0735">Signal-anchor</keyword>
<keyword id="KW-0808">Transferase</keyword>
<keyword id="KW-0812">Transmembrane</keyword>
<keyword id="KW-1133">Transmembrane helix</keyword>
<feature type="chain" id="PRO_0000288529" description="Glycosyltransferase 8 domain-containing protein 1">
    <location>
        <begin position="1"/>
        <end position="371"/>
    </location>
</feature>
<feature type="topological domain" description="Cytoplasmic" evidence="1">
    <location>
        <begin position="1"/>
        <end position="7"/>
    </location>
</feature>
<feature type="transmembrane region" description="Helical; Signal-anchor for type II membrane protein" evidence="1">
    <location>
        <begin position="8"/>
        <end position="28"/>
    </location>
</feature>
<feature type="topological domain" description="Lumenal" evidence="1">
    <location>
        <begin position="29"/>
        <end position="371"/>
    </location>
</feature>
<feature type="glycosylation site" description="N-linked (GlcNAc...) asparagine" evidence="1">
    <location>
        <position position="257"/>
    </location>
</feature>
<feature type="splice variant" id="VSP_025707" description="In isoform 2." evidence="2">
    <original>YNYIGYLDYKKE</original>
    <variation>VMTYCRSHSGKA</variation>
    <location>
        <begin position="216"/>
        <end position="227"/>
    </location>
</feature>
<feature type="splice variant" id="VSP_025708" description="In isoform 2." evidence="2">
    <location>
        <begin position="228"/>
        <end position="371"/>
    </location>
</feature>
<feature type="sequence conflict" description="In Ref. 1; BAB26903." evidence="3" ref="1">
    <original>R</original>
    <variation>G</variation>
    <location>
        <position position="92"/>
    </location>
</feature>
<feature type="sequence conflict" description="In Ref. 1; BAB26903." evidence="3" ref="1">
    <original>N</original>
    <variation>K</variation>
    <location>
        <position position="185"/>
    </location>
</feature>
<feature type="sequence conflict" description="In Ref. 1; BAB26903." evidence="3" ref="1">
    <original>R</original>
    <variation>S</variation>
    <location>
        <position position="363"/>
    </location>
</feature>
<organism>
    <name type="scientific">Mus musculus</name>
    <name type="common">Mouse</name>
    <dbReference type="NCBI Taxonomy" id="10090"/>
    <lineage>
        <taxon>Eukaryota</taxon>
        <taxon>Metazoa</taxon>
        <taxon>Chordata</taxon>
        <taxon>Craniata</taxon>
        <taxon>Vertebrata</taxon>
        <taxon>Euteleostomi</taxon>
        <taxon>Mammalia</taxon>
        <taxon>Eutheria</taxon>
        <taxon>Euarchontoglires</taxon>
        <taxon>Glires</taxon>
        <taxon>Rodentia</taxon>
        <taxon>Myomorpha</taxon>
        <taxon>Muroidea</taxon>
        <taxon>Muridae</taxon>
        <taxon>Murinae</taxon>
        <taxon>Mus</taxon>
        <taxon>Mus</taxon>
    </lineage>
</organism>
<accession>Q6NSU3</accession>
<accession>Q3TV18</accession>
<accession>Q9CWT8</accession>
<sequence length="371" mass="41990">MSFRKVNIIIWVLAVVLFLLVLHHNFLSLSSLLKNDISDSGIVGLQPIDFVASAHQHPVSERQEEIPVVIAASEDRLGGTIAAINSVHQNTRSNVMFYIVTFNSTADHLRSWLNSGSLKSIRYKIVNFDTKLLEGKVKQDPDQGESMKPLTFARFYLPILVPSAKKAIYMDDDVIVQGDILALYNTPLKPGHAAAFSEDCDSASTKVIIRGAGNQYNYIGYLDYKKERIRKLSMKASTCSFNPGVFVANLTEWKRQNVTNQLEKWMKLNVEEGLYSRTLAGSITTPPLLIVFYQQHSTIDPMWNVRHLGSSAGKRYSPQFVKAAKLLHWNGHFKPWGRTASYADVWEKWYIPDPTGKFSLIRRHMDTSNIK</sequence>
<protein>
    <recommendedName>
        <fullName>Glycosyltransferase 8 domain-containing protein 1</fullName>
        <ecNumber>2.4.1.-</ecNumber>
    </recommendedName>
</protein>
<gene>
    <name type="primary">Glt8d1</name>
</gene>
<evidence type="ECO:0000255" key="1"/>
<evidence type="ECO:0000303" key="2">
    <source>
    </source>
</evidence>
<evidence type="ECO:0000305" key="3"/>
<dbReference type="EC" id="2.4.1.-"/>
<dbReference type="EMBL" id="AK010388">
    <property type="protein sequence ID" value="BAB26903.1"/>
    <property type="molecule type" value="mRNA"/>
</dbReference>
<dbReference type="EMBL" id="AK160461">
    <property type="protein sequence ID" value="BAE35802.1"/>
    <property type="molecule type" value="mRNA"/>
</dbReference>
<dbReference type="EMBL" id="BC069873">
    <property type="protein sequence ID" value="AAH69873.1"/>
    <property type="molecule type" value="mRNA"/>
</dbReference>
<dbReference type="CCDS" id="CCDS26904.1">
    <molecule id="Q6NSU3-1"/>
</dbReference>
<dbReference type="RefSeq" id="NP_001159402.1">
    <molecule id="Q6NSU3-1"/>
    <property type="nucleotide sequence ID" value="NM_001165930.2"/>
</dbReference>
<dbReference type="RefSeq" id="NP_001390227.1">
    <molecule id="Q6NSU3-1"/>
    <property type="nucleotide sequence ID" value="NM_001403298.1"/>
</dbReference>
<dbReference type="RefSeq" id="NP_001390228.1">
    <molecule id="Q6NSU3-1"/>
    <property type="nucleotide sequence ID" value="NM_001403299.1"/>
</dbReference>
<dbReference type="RefSeq" id="NP_001390229.1">
    <molecule id="Q6NSU3-1"/>
    <property type="nucleotide sequence ID" value="NM_001403300.1"/>
</dbReference>
<dbReference type="RefSeq" id="NP_001390230.1">
    <molecule id="Q6NSU3-1"/>
    <property type="nucleotide sequence ID" value="NM_001403301.1"/>
</dbReference>
<dbReference type="RefSeq" id="NP_001390234.1">
    <molecule id="Q6NSU3-1"/>
    <property type="nucleotide sequence ID" value="NM_001403305.1"/>
</dbReference>
<dbReference type="RefSeq" id="NP_001390235.1">
    <molecule id="Q6NSU3-1"/>
    <property type="nucleotide sequence ID" value="NM_001403306.1"/>
</dbReference>
<dbReference type="RefSeq" id="NP_001390237.1">
    <molecule id="Q6NSU3-1"/>
    <property type="nucleotide sequence ID" value="NM_001403308.1"/>
</dbReference>
<dbReference type="RefSeq" id="NP_001390239.1">
    <molecule id="Q6NSU3-1"/>
    <property type="nucleotide sequence ID" value="NM_001403310.1"/>
</dbReference>
<dbReference type="RefSeq" id="NP_083902.2">
    <molecule id="Q6NSU3-1"/>
    <property type="nucleotide sequence ID" value="NM_029626.3"/>
</dbReference>
<dbReference type="RefSeq" id="XP_006519732.2">
    <property type="nucleotide sequence ID" value="XM_006519669.2"/>
</dbReference>
<dbReference type="RefSeq" id="XP_006519735.1">
    <property type="nucleotide sequence ID" value="XM_006519672.3"/>
</dbReference>
<dbReference type="RefSeq" id="XP_006519736.1">
    <property type="nucleotide sequence ID" value="XM_006519673.3"/>
</dbReference>
<dbReference type="RefSeq" id="XP_006519737.1">
    <property type="nucleotide sequence ID" value="XM_006519674.2"/>
</dbReference>
<dbReference type="SMR" id="Q6NSU3"/>
<dbReference type="BioGRID" id="218149">
    <property type="interactions" value="1"/>
</dbReference>
<dbReference type="FunCoup" id="Q6NSU3">
    <property type="interactions" value="1099"/>
</dbReference>
<dbReference type="STRING" id="10090.ENSMUSP00000022476"/>
<dbReference type="CAZy" id="GT8">
    <property type="family name" value="Glycosyltransferase Family 8"/>
</dbReference>
<dbReference type="GlyCosmos" id="Q6NSU3">
    <property type="glycosylation" value="1 site, No reported glycans"/>
</dbReference>
<dbReference type="GlyGen" id="Q6NSU3">
    <property type="glycosylation" value="2 sites, 2 N-linked glycans (2 sites)"/>
</dbReference>
<dbReference type="PhosphoSitePlus" id="Q6NSU3"/>
<dbReference type="PaxDb" id="10090-ENSMUSP00000022476"/>
<dbReference type="PeptideAtlas" id="Q6NSU3"/>
<dbReference type="ProteomicsDB" id="268882">
    <molecule id="Q6NSU3-1"/>
</dbReference>
<dbReference type="ProteomicsDB" id="268883">
    <molecule id="Q6NSU3-2"/>
</dbReference>
<dbReference type="Pumba" id="Q6NSU3"/>
<dbReference type="Antibodypedia" id="2243">
    <property type="antibodies" value="155 antibodies from 18 providers"/>
</dbReference>
<dbReference type="DNASU" id="76485"/>
<dbReference type="Ensembl" id="ENSMUST00000022476.9">
    <molecule id="Q6NSU3-1"/>
    <property type="protein sequence ID" value="ENSMUSP00000022476.8"/>
    <property type="gene ID" value="ENSMUSG00000021916.17"/>
</dbReference>
<dbReference type="Ensembl" id="ENSMUST00000168584.9">
    <molecule id="Q6NSU3-1"/>
    <property type="protein sequence ID" value="ENSMUSP00000129323.2"/>
    <property type="gene ID" value="ENSMUSG00000021916.17"/>
</dbReference>
<dbReference type="GeneID" id="76485"/>
<dbReference type="KEGG" id="mmu:76485"/>
<dbReference type="UCSC" id="uc007swf.2">
    <molecule id="Q6NSU3-1"/>
    <property type="organism name" value="mouse"/>
</dbReference>
<dbReference type="UCSC" id="uc007swg.2">
    <molecule id="Q6NSU3-2"/>
    <property type="organism name" value="mouse"/>
</dbReference>
<dbReference type="AGR" id="MGI:1923735"/>
<dbReference type="CTD" id="55830"/>
<dbReference type="MGI" id="MGI:1923735">
    <property type="gene designation" value="Glt8d1"/>
</dbReference>
<dbReference type="VEuPathDB" id="HostDB:ENSMUSG00000021916"/>
<dbReference type="eggNOG" id="ENOG502QTN8">
    <property type="taxonomic scope" value="Eukaryota"/>
</dbReference>
<dbReference type="GeneTree" id="ENSGT00940000159273"/>
<dbReference type="HOGENOM" id="CLU_010770_0_0_1"/>
<dbReference type="InParanoid" id="Q6NSU3"/>
<dbReference type="OMA" id="YKQHSNI"/>
<dbReference type="OrthoDB" id="411524at2759"/>
<dbReference type="PhylomeDB" id="Q6NSU3"/>
<dbReference type="TreeFam" id="TF332433"/>
<dbReference type="BioGRID-ORCS" id="76485">
    <property type="hits" value="2 hits in 77 CRISPR screens"/>
</dbReference>
<dbReference type="ChiTaRS" id="Glt8d1">
    <property type="organism name" value="mouse"/>
</dbReference>
<dbReference type="PRO" id="PR:Q6NSU3"/>
<dbReference type="Proteomes" id="UP000000589">
    <property type="component" value="Chromosome 14"/>
</dbReference>
<dbReference type="RNAct" id="Q6NSU3">
    <property type="molecule type" value="protein"/>
</dbReference>
<dbReference type="Bgee" id="ENSMUSG00000021916">
    <property type="expression patterns" value="Expressed in otolith organ and 230 other cell types or tissues"/>
</dbReference>
<dbReference type="ExpressionAtlas" id="Q6NSU3">
    <property type="expression patterns" value="baseline and differential"/>
</dbReference>
<dbReference type="GO" id="GO:0016020">
    <property type="term" value="C:membrane"/>
    <property type="evidence" value="ECO:0007669"/>
    <property type="project" value="UniProtKB-SubCell"/>
</dbReference>
<dbReference type="GO" id="GO:0008194">
    <property type="term" value="F:UDP-glycosyltransferase activity"/>
    <property type="evidence" value="ECO:0007669"/>
    <property type="project" value="UniProtKB-ARBA"/>
</dbReference>
<dbReference type="CDD" id="cd06429">
    <property type="entry name" value="GT8_like_1"/>
    <property type="match status" value="1"/>
</dbReference>
<dbReference type="FunFam" id="3.90.550.10:FF:000069">
    <property type="entry name" value="Glycosyltransferase 8 domain-containing protein 1"/>
    <property type="match status" value="1"/>
</dbReference>
<dbReference type="Gene3D" id="3.90.550.10">
    <property type="entry name" value="Spore Coat Polysaccharide Biosynthesis Protein SpsA, Chain A"/>
    <property type="match status" value="1"/>
</dbReference>
<dbReference type="InterPro" id="IPR002495">
    <property type="entry name" value="Glyco_trans_8"/>
</dbReference>
<dbReference type="InterPro" id="IPR050748">
    <property type="entry name" value="Glycosyltrans_8_dom-fam"/>
</dbReference>
<dbReference type="InterPro" id="IPR029044">
    <property type="entry name" value="Nucleotide-diphossugar_trans"/>
</dbReference>
<dbReference type="PANTHER" id="PTHR13778">
    <property type="entry name" value="GLYCOSYLTRANSFERASE 8 DOMAIN-CONTAINING PROTEIN"/>
    <property type="match status" value="1"/>
</dbReference>
<dbReference type="PANTHER" id="PTHR13778:SF3">
    <property type="entry name" value="GLYCOSYLTRANSFERASE 8 DOMAIN-CONTAINING PROTEIN 1"/>
    <property type="match status" value="1"/>
</dbReference>
<dbReference type="Pfam" id="PF01501">
    <property type="entry name" value="Glyco_transf_8"/>
    <property type="match status" value="1"/>
</dbReference>
<dbReference type="SUPFAM" id="SSF53448">
    <property type="entry name" value="Nucleotide-diphospho-sugar transferases"/>
    <property type="match status" value="1"/>
</dbReference>
<proteinExistence type="evidence at protein level"/>
<reference key="1">
    <citation type="journal article" date="2005" name="Science">
        <title>The transcriptional landscape of the mammalian genome.</title>
        <authorList>
            <person name="Carninci P."/>
            <person name="Kasukawa T."/>
            <person name="Katayama S."/>
            <person name="Gough J."/>
            <person name="Frith M.C."/>
            <person name="Maeda N."/>
            <person name="Oyama R."/>
            <person name="Ravasi T."/>
            <person name="Lenhard B."/>
            <person name="Wells C."/>
            <person name="Kodzius R."/>
            <person name="Shimokawa K."/>
            <person name="Bajic V.B."/>
            <person name="Brenner S.E."/>
            <person name="Batalov S."/>
            <person name="Forrest A.R."/>
            <person name="Zavolan M."/>
            <person name="Davis M.J."/>
            <person name="Wilming L.G."/>
            <person name="Aidinis V."/>
            <person name="Allen J.E."/>
            <person name="Ambesi-Impiombato A."/>
            <person name="Apweiler R."/>
            <person name="Aturaliya R.N."/>
            <person name="Bailey T.L."/>
            <person name="Bansal M."/>
            <person name="Baxter L."/>
            <person name="Beisel K.W."/>
            <person name="Bersano T."/>
            <person name="Bono H."/>
            <person name="Chalk A.M."/>
            <person name="Chiu K.P."/>
            <person name="Choudhary V."/>
            <person name="Christoffels A."/>
            <person name="Clutterbuck D.R."/>
            <person name="Crowe M.L."/>
            <person name="Dalla E."/>
            <person name="Dalrymple B.P."/>
            <person name="de Bono B."/>
            <person name="Della Gatta G."/>
            <person name="di Bernardo D."/>
            <person name="Down T."/>
            <person name="Engstrom P."/>
            <person name="Fagiolini M."/>
            <person name="Faulkner G."/>
            <person name="Fletcher C.F."/>
            <person name="Fukushima T."/>
            <person name="Furuno M."/>
            <person name="Futaki S."/>
            <person name="Gariboldi M."/>
            <person name="Georgii-Hemming P."/>
            <person name="Gingeras T.R."/>
            <person name="Gojobori T."/>
            <person name="Green R.E."/>
            <person name="Gustincich S."/>
            <person name="Harbers M."/>
            <person name="Hayashi Y."/>
            <person name="Hensch T.K."/>
            <person name="Hirokawa N."/>
            <person name="Hill D."/>
            <person name="Huminiecki L."/>
            <person name="Iacono M."/>
            <person name="Ikeo K."/>
            <person name="Iwama A."/>
            <person name="Ishikawa T."/>
            <person name="Jakt M."/>
            <person name="Kanapin A."/>
            <person name="Katoh M."/>
            <person name="Kawasawa Y."/>
            <person name="Kelso J."/>
            <person name="Kitamura H."/>
            <person name="Kitano H."/>
            <person name="Kollias G."/>
            <person name="Krishnan S.P."/>
            <person name="Kruger A."/>
            <person name="Kummerfeld S.K."/>
            <person name="Kurochkin I.V."/>
            <person name="Lareau L.F."/>
            <person name="Lazarevic D."/>
            <person name="Lipovich L."/>
            <person name="Liu J."/>
            <person name="Liuni S."/>
            <person name="McWilliam S."/>
            <person name="Madan Babu M."/>
            <person name="Madera M."/>
            <person name="Marchionni L."/>
            <person name="Matsuda H."/>
            <person name="Matsuzawa S."/>
            <person name="Miki H."/>
            <person name="Mignone F."/>
            <person name="Miyake S."/>
            <person name="Morris K."/>
            <person name="Mottagui-Tabar S."/>
            <person name="Mulder N."/>
            <person name="Nakano N."/>
            <person name="Nakauchi H."/>
            <person name="Ng P."/>
            <person name="Nilsson R."/>
            <person name="Nishiguchi S."/>
            <person name="Nishikawa S."/>
            <person name="Nori F."/>
            <person name="Ohara O."/>
            <person name="Okazaki Y."/>
            <person name="Orlando V."/>
            <person name="Pang K.C."/>
            <person name="Pavan W.J."/>
            <person name="Pavesi G."/>
            <person name="Pesole G."/>
            <person name="Petrovsky N."/>
            <person name="Piazza S."/>
            <person name="Reed J."/>
            <person name="Reid J.F."/>
            <person name="Ring B.Z."/>
            <person name="Ringwald M."/>
            <person name="Rost B."/>
            <person name="Ruan Y."/>
            <person name="Salzberg S.L."/>
            <person name="Sandelin A."/>
            <person name="Schneider C."/>
            <person name="Schoenbach C."/>
            <person name="Sekiguchi K."/>
            <person name="Semple C.A."/>
            <person name="Seno S."/>
            <person name="Sessa L."/>
            <person name="Sheng Y."/>
            <person name="Shibata Y."/>
            <person name="Shimada H."/>
            <person name="Shimada K."/>
            <person name="Silva D."/>
            <person name="Sinclair B."/>
            <person name="Sperling S."/>
            <person name="Stupka E."/>
            <person name="Sugiura K."/>
            <person name="Sultana R."/>
            <person name="Takenaka Y."/>
            <person name="Taki K."/>
            <person name="Tammoja K."/>
            <person name="Tan S.L."/>
            <person name="Tang S."/>
            <person name="Taylor M.S."/>
            <person name="Tegner J."/>
            <person name="Teichmann S.A."/>
            <person name="Ueda H.R."/>
            <person name="van Nimwegen E."/>
            <person name="Verardo R."/>
            <person name="Wei C.L."/>
            <person name="Yagi K."/>
            <person name="Yamanishi H."/>
            <person name="Zabarovsky E."/>
            <person name="Zhu S."/>
            <person name="Zimmer A."/>
            <person name="Hide W."/>
            <person name="Bult C."/>
            <person name="Grimmond S.M."/>
            <person name="Teasdale R.D."/>
            <person name="Liu E.T."/>
            <person name="Brusic V."/>
            <person name="Quackenbush J."/>
            <person name="Wahlestedt C."/>
            <person name="Mattick J.S."/>
            <person name="Hume D.A."/>
            <person name="Kai C."/>
            <person name="Sasaki D."/>
            <person name="Tomaru Y."/>
            <person name="Fukuda S."/>
            <person name="Kanamori-Katayama M."/>
            <person name="Suzuki M."/>
            <person name="Aoki J."/>
            <person name="Arakawa T."/>
            <person name="Iida J."/>
            <person name="Imamura K."/>
            <person name="Itoh M."/>
            <person name="Kato T."/>
            <person name="Kawaji H."/>
            <person name="Kawagashira N."/>
            <person name="Kawashima T."/>
            <person name="Kojima M."/>
            <person name="Kondo S."/>
            <person name="Konno H."/>
            <person name="Nakano K."/>
            <person name="Ninomiya N."/>
            <person name="Nishio T."/>
            <person name="Okada M."/>
            <person name="Plessy C."/>
            <person name="Shibata K."/>
            <person name="Shiraki T."/>
            <person name="Suzuki S."/>
            <person name="Tagami M."/>
            <person name="Waki K."/>
            <person name="Watahiki A."/>
            <person name="Okamura-Oho Y."/>
            <person name="Suzuki H."/>
            <person name="Kawai J."/>
            <person name="Hayashizaki Y."/>
        </authorList>
    </citation>
    <scope>NUCLEOTIDE SEQUENCE [LARGE SCALE MRNA] (ISOFORMS 1 AND 2)</scope>
    <source>
        <strain>C57BL/6J</strain>
        <tissue>Pancreas</tissue>
    </source>
</reference>
<reference key="2">
    <citation type="journal article" date="2004" name="Genome Res.">
        <title>The status, quality, and expansion of the NIH full-length cDNA project: the Mammalian Gene Collection (MGC).</title>
        <authorList>
            <consortium name="The MGC Project Team"/>
        </authorList>
    </citation>
    <scope>NUCLEOTIDE SEQUENCE [LARGE SCALE MRNA] (ISOFORM 1)</scope>
    <source>
        <tissue>Olfactory epithelium</tissue>
    </source>
</reference>
<reference key="3">
    <citation type="journal article" date="2010" name="Cell">
        <title>A tissue-specific atlas of mouse protein phosphorylation and expression.</title>
        <authorList>
            <person name="Huttlin E.L."/>
            <person name="Jedrychowski M.P."/>
            <person name="Elias J.E."/>
            <person name="Goswami T."/>
            <person name="Rad R."/>
            <person name="Beausoleil S.A."/>
            <person name="Villen J."/>
            <person name="Haas W."/>
            <person name="Sowa M.E."/>
            <person name="Gygi S.P."/>
        </authorList>
    </citation>
    <scope>IDENTIFICATION BY MASS SPECTROMETRY [LARGE SCALE ANALYSIS]</scope>
    <source>
        <tissue>Testis</tissue>
    </source>
</reference>
<name>GL8D1_MOUSE</name>